<accession>C6DFE2</accession>
<reference key="1">
    <citation type="submission" date="2009-07" db="EMBL/GenBank/DDBJ databases">
        <title>Complete sequence of Pectobacterium carotovorum subsp. carotovorum PC1.</title>
        <authorList>
            <consortium name="US DOE Joint Genome Institute"/>
            <person name="Lucas S."/>
            <person name="Copeland A."/>
            <person name="Lapidus A."/>
            <person name="Glavina del Rio T."/>
            <person name="Tice H."/>
            <person name="Bruce D."/>
            <person name="Goodwin L."/>
            <person name="Pitluck S."/>
            <person name="Munk A.C."/>
            <person name="Brettin T."/>
            <person name="Detter J.C."/>
            <person name="Han C."/>
            <person name="Tapia R."/>
            <person name="Larimer F."/>
            <person name="Land M."/>
            <person name="Hauser L."/>
            <person name="Kyrpides N."/>
            <person name="Mikhailova N."/>
            <person name="Balakrishnan V."/>
            <person name="Glasner J."/>
            <person name="Perna N.T."/>
        </authorList>
    </citation>
    <scope>NUCLEOTIDE SEQUENCE [LARGE SCALE GENOMIC DNA]</scope>
    <source>
        <strain>PC1</strain>
    </source>
</reference>
<feature type="chain" id="PRO_1000215645" description="tRNA U34 carboxymethyltransferase">
    <location>
        <begin position="1"/>
        <end position="328"/>
    </location>
</feature>
<feature type="binding site" evidence="1">
    <location>
        <position position="91"/>
    </location>
    <ligand>
        <name>carboxy-S-adenosyl-L-methionine</name>
        <dbReference type="ChEBI" id="CHEBI:134278"/>
    </ligand>
</feature>
<feature type="binding site" evidence="1">
    <location>
        <position position="105"/>
    </location>
    <ligand>
        <name>carboxy-S-adenosyl-L-methionine</name>
        <dbReference type="ChEBI" id="CHEBI:134278"/>
    </ligand>
</feature>
<feature type="binding site" evidence="1">
    <location>
        <position position="110"/>
    </location>
    <ligand>
        <name>carboxy-S-adenosyl-L-methionine</name>
        <dbReference type="ChEBI" id="CHEBI:134278"/>
    </ligand>
</feature>
<feature type="binding site" evidence="1">
    <location>
        <position position="130"/>
    </location>
    <ligand>
        <name>carboxy-S-adenosyl-L-methionine</name>
        <dbReference type="ChEBI" id="CHEBI:134278"/>
    </ligand>
</feature>
<feature type="binding site" evidence="1">
    <location>
        <begin position="181"/>
        <end position="182"/>
    </location>
    <ligand>
        <name>carboxy-S-adenosyl-L-methionine</name>
        <dbReference type="ChEBI" id="CHEBI:134278"/>
    </ligand>
</feature>
<feature type="binding site" evidence="1">
    <location>
        <position position="196"/>
    </location>
    <ligand>
        <name>carboxy-S-adenosyl-L-methionine</name>
        <dbReference type="ChEBI" id="CHEBI:134278"/>
    </ligand>
</feature>
<feature type="binding site" evidence="1">
    <location>
        <position position="200"/>
    </location>
    <ligand>
        <name>carboxy-S-adenosyl-L-methionine</name>
        <dbReference type="ChEBI" id="CHEBI:134278"/>
    </ligand>
</feature>
<feature type="binding site" evidence="1">
    <location>
        <position position="315"/>
    </location>
    <ligand>
        <name>carboxy-S-adenosyl-L-methionine</name>
        <dbReference type="ChEBI" id="CHEBI:134278"/>
    </ligand>
</feature>
<evidence type="ECO:0000255" key="1">
    <source>
        <dbReference type="HAMAP-Rule" id="MF_01590"/>
    </source>
</evidence>
<organism>
    <name type="scientific">Pectobacterium carotovorum subsp. carotovorum (strain PC1)</name>
    <dbReference type="NCBI Taxonomy" id="561230"/>
    <lineage>
        <taxon>Bacteria</taxon>
        <taxon>Pseudomonadati</taxon>
        <taxon>Pseudomonadota</taxon>
        <taxon>Gammaproteobacteria</taxon>
        <taxon>Enterobacterales</taxon>
        <taxon>Pectobacteriaceae</taxon>
        <taxon>Pectobacterium</taxon>
    </lineage>
</organism>
<gene>
    <name evidence="1" type="primary">cmoB</name>
    <name type="ordered locus">PC1_1810</name>
</gene>
<protein>
    <recommendedName>
        <fullName evidence="1">tRNA U34 carboxymethyltransferase</fullName>
        <ecNumber evidence="1">2.5.1.-</ecNumber>
    </recommendedName>
</protein>
<comment type="function">
    <text evidence="1">Catalyzes carboxymethyl transfer from carboxy-S-adenosyl-L-methionine (Cx-SAM) to 5-hydroxyuridine (ho5U) to form 5-carboxymethoxyuridine (cmo5U) at position 34 in tRNAs.</text>
</comment>
<comment type="catalytic activity">
    <reaction evidence="1">
        <text>carboxy-S-adenosyl-L-methionine + 5-hydroxyuridine(34) in tRNA = 5-carboxymethoxyuridine(34) in tRNA + S-adenosyl-L-homocysteine + H(+)</text>
        <dbReference type="Rhea" id="RHEA:52848"/>
        <dbReference type="Rhea" id="RHEA-COMP:13381"/>
        <dbReference type="Rhea" id="RHEA-COMP:13383"/>
        <dbReference type="ChEBI" id="CHEBI:15378"/>
        <dbReference type="ChEBI" id="CHEBI:57856"/>
        <dbReference type="ChEBI" id="CHEBI:134278"/>
        <dbReference type="ChEBI" id="CHEBI:136877"/>
        <dbReference type="ChEBI" id="CHEBI:136879"/>
    </reaction>
</comment>
<comment type="subunit">
    <text evidence="1">Homotetramer.</text>
</comment>
<comment type="similarity">
    <text evidence="1">Belongs to the class I-like SAM-binding methyltransferase superfamily. CmoB family.</text>
</comment>
<proteinExistence type="inferred from homology"/>
<dbReference type="EC" id="2.5.1.-" evidence="1"/>
<dbReference type="EMBL" id="CP001657">
    <property type="protein sequence ID" value="ACT12851.1"/>
    <property type="molecule type" value="Genomic_DNA"/>
</dbReference>
<dbReference type="RefSeq" id="WP_015840057.1">
    <property type="nucleotide sequence ID" value="NC_012917.1"/>
</dbReference>
<dbReference type="SMR" id="C6DFE2"/>
<dbReference type="STRING" id="561230.PC1_1810"/>
<dbReference type="KEGG" id="pct:PC1_1810"/>
<dbReference type="eggNOG" id="COG0500">
    <property type="taxonomic scope" value="Bacteria"/>
</dbReference>
<dbReference type="HOGENOM" id="CLU_052665_0_0_6"/>
<dbReference type="OrthoDB" id="9773188at2"/>
<dbReference type="Proteomes" id="UP000002736">
    <property type="component" value="Chromosome"/>
</dbReference>
<dbReference type="GO" id="GO:0016765">
    <property type="term" value="F:transferase activity, transferring alkyl or aryl (other than methyl) groups"/>
    <property type="evidence" value="ECO:0007669"/>
    <property type="project" value="UniProtKB-UniRule"/>
</dbReference>
<dbReference type="GO" id="GO:0002098">
    <property type="term" value="P:tRNA wobble uridine modification"/>
    <property type="evidence" value="ECO:0007669"/>
    <property type="project" value="InterPro"/>
</dbReference>
<dbReference type="CDD" id="cd02440">
    <property type="entry name" value="AdoMet_MTases"/>
    <property type="match status" value="1"/>
</dbReference>
<dbReference type="Gene3D" id="3.40.50.150">
    <property type="entry name" value="Vaccinia Virus protein VP39"/>
    <property type="match status" value="1"/>
</dbReference>
<dbReference type="HAMAP" id="MF_01590">
    <property type="entry name" value="tRNA_carboxymethyltr_CmoB"/>
    <property type="match status" value="1"/>
</dbReference>
<dbReference type="InterPro" id="IPR010017">
    <property type="entry name" value="CmoB"/>
</dbReference>
<dbReference type="InterPro" id="IPR027555">
    <property type="entry name" value="Mo5U34_MeTrfas-like"/>
</dbReference>
<dbReference type="InterPro" id="IPR029063">
    <property type="entry name" value="SAM-dependent_MTases_sf"/>
</dbReference>
<dbReference type="NCBIfam" id="NF011650">
    <property type="entry name" value="PRK15068.1"/>
    <property type="match status" value="1"/>
</dbReference>
<dbReference type="NCBIfam" id="TIGR00452">
    <property type="entry name" value="tRNA 5-methoxyuridine(34)/uridine 5-oxyacetic acid(34) synthase CmoB"/>
    <property type="match status" value="1"/>
</dbReference>
<dbReference type="Pfam" id="PF08003">
    <property type="entry name" value="Methyltransf_9"/>
    <property type="match status" value="1"/>
</dbReference>
<dbReference type="SUPFAM" id="SSF53335">
    <property type="entry name" value="S-adenosyl-L-methionine-dependent methyltransferases"/>
    <property type="match status" value="1"/>
</dbReference>
<keyword id="KW-0808">Transferase</keyword>
<keyword id="KW-0819">tRNA processing</keyword>
<name>CMOB_PECCP</name>
<sequence>MIDFGNFYQQIAKGPLSHWLNTLPSQLSSWQQESLHGKFKLWFNSLEHLPSLTPTTLDLNDSVTARMEPDISEGQREGIEKLLRNLMPWRKGPFSLYGVDINTEWRSDWKWQRVLPHISPLKNRLILDVGCGSGYHLWRMVGEGAMMAVGIDPMQLFLCQFEAVRKLLGDDQRAHVLPLGIEQLPELAAFDTVFSMGVLYHRRSPLDHLWQLKNQLVAGGELVLETLVIEGDENQVLVPGERYAQMRNVYFIPSAAALTTWLEKCGFVDVRVVDVCTTTTQEQRRTDWMITESLAEFLDPEDPSKTVEGYPAPVRAVLVARKPGIYQP</sequence>